<protein>
    <recommendedName>
        <fullName evidence="1">Small ribosomal subunit protein bS21</fullName>
    </recommendedName>
    <alternativeName>
        <fullName evidence="2">30S ribosomal protein S21</fullName>
    </alternativeName>
</protein>
<dbReference type="EMBL" id="AM286690">
    <property type="protein sequence ID" value="CAL17508.1"/>
    <property type="molecule type" value="Genomic_DNA"/>
</dbReference>
<dbReference type="RefSeq" id="WP_007148705.1">
    <property type="nucleotide sequence ID" value="NC_008260.1"/>
</dbReference>
<dbReference type="SMR" id="Q0VMU0"/>
<dbReference type="STRING" id="393595.ABO_2060"/>
<dbReference type="KEGG" id="abo:ABO_2060"/>
<dbReference type="eggNOG" id="COG0828">
    <property type="taxonomic scope" value="Bacteria"/>
</dbReference>
<dbReference type="HOGENOM" id="CLU_159258_1_0_6"/>
<dbReference type="OrthoDB" id="9799244at2"/>
<dbReference type="Proteomes" id="UP000008871">
    <property type="component" value="Chromosome"/>
</dbReference>
<dbReference type="GO" id="GO:1990904">
    <property type="term" value="C:ribonucleoprotein complex"/>
    <property type="evidence" value="ECO:0007669"/>
    <property type="project" value="UniProtKB-KW"/>
</dbReference>
<dbReference type="GO" id="GO:0005840">
    <property type="term" value="C:ribosome"/>
    <property type="evidence" value="ECO:0007669"/>
    <property type="project" value="UniProtKB-KW"/>
</dbReference>
<dbReference type="GO" id="GO:0003735">
    <property type="term" value="F:structural constituent of ribosome"/>
    <property type="evidence" value="ECO:0007669"/>
    <property type="project" value="InterPro"/>
</dbReference>
<dbReference type="GO" id="GO:0006412">
    <property type="term" value="P:translation"/>
    <property type="evidence" value="ECO:0007669"/>
    <property type="project" value="UniProtKB-UniRule"/>
</dbReference>
<dbReference type="Gene3D" id="1.20.5.1150">
    <property type="entry name" value="Ribosomal protein S8"/>
    <property type="match status" value="1"/>
</dbReference>
<dbReference type="HAMAP" id="MF_00358">
    <property type="entry name" value="Ribosomal_bS21"/>
    <property type="match status" value="1"/>
</dbReference>
<dbReference type="InterPro" id="IPR001911">
    <property type="entry name" value="Ribosomal_bS21"/>
</dbReference>
<dbReference type="InterPro" id="IPR018278">
    <property type="entry name" value="Ribosomal_bS21_CS"/>
</dbReference>
<dbReference type="InterPro" id="IPR038380">
    <property type="entry name" value="Ribosomal_bS21_sf"/>
</dbReference>
<dbReference type="NCBIfam" id="TIGR00030">
    <property type="entry name" value="S21p"/>
    <property type="match status" value="1"/>
</dbReference>
<dbReference type="PANTHER" id="PTHR21109">
    <property type="entry name" value="MITOCHONDRIAL 28S RIBOSOMAL PROTEIN S21"/>
    <property type="match status" value="1"/>
</dbReference>
<dbReference type="PANTHER" id="PTHR21109:SF22">
    <property type="entry name" value="SMALL RIBOSOMAL SUBUNIT PROTEIN BS21"/>
    <property type="match status" value="1"/>
</dbReference>
<dbReference type="Pfam" id="PF01165">
    <property type="entry name" value="Ribosomal_S21"/>
    <property type="match status" value="1"/>
</dbReference>
<dbReference type="PRINTS" id="PR00976">
    <property type="entry name" value="RIBOSOMALS21"/>
</dbReference>
<dbReference type="PROSITE" id="PS01181">
    <property type="entry name" value="RIBOSOMAL_S21"/>
    <property type="match status" value="1"/>
</dbReference>
<evidence type="ECO:0000255" key="1">
    <source>
        <dbReference type="HAMAP-Rule" id="MF_00358"/>
    </source>
</evidence>
<evidence type="ECO:0000305" key="2"/>
<name>RS21_ALCBS</name>
<organism>
    <name type="scientific">Alcanivorax borkumensis (strain ATCC 700651 / DSM 11573 / NCIMB 13689 / SK2)</name>
    <dbReference type="NCBI Taxonomy" id="393595"/>
    <lineage>
        <taxon>Bacteria</taxon>
        <taxon>Pseudomonadati</taxon>
        <taxon>Pseudomonadota</taxon>
        <taxon>Gammaproteobacteria</taxon>
        <taxon>Oceanospirillales</taxon>
        <taxon>Alcanivoracaceae</taxon>
        <taxon>Alcanivorax</taxon>
    </lineage>
</organism>
<feature type="chain" id="PRO_0000266619" description="Small ribosomal subunit protein bS21">
    <location>
        <begin position="1"/>
        <end position="71"/>
    </location>
</feature>
<sequence>MPQVKVKEGEPFDVALRRFKRGCEKAGILSEVRRREQYEKPTQERKRKRAAAVKRHLKKLQREQLARKRLY</sequence>
<accession>Q0VMU0</accession>
<comment type="similarity">
    <text evidence="1">Belongs to the bacterial ribosomal protein bS21 family.</text>
</comment>
<reference key="1">
    <citation type="journal article" date="2006" name="Nat. Biotechnol.">
        <title>Genome sequence of the ubiquitous hydrocarbon-degrading marine bacterium Alcanivorax borkumensis.</title>
        <authorList>
            <person name="Schneiker S."/>
            <person name="Martins dos Santos V.A.P."/>
            <person name="Bartels D."/>
            <person name="Bekel T."/>
            <person name="Brecht M."/>
            <person name="Buhrmester J."/>
            <person name="Chernikova T.N."/>
            <person name="Denaro R."/>
            <person name="Ferrer M."/>
            <person name="Gertler C."/>
            <person name="Goesmann A."/>
            <person name="Golyshina O.V."/>
            <person name="Kaminski F."/>
            <person name="Khachane A.N."/>
            <person name="Lang S."/>
            <person name="Linke B."/>
            <person name="McHardy A.C."/>
            <person name="Meyer F."/>
            <person name="Nechitaylo T."/>
            <person name="Puehler A."/>
            <person name="Regenhardt D."/>
            <person name="Rupp O."/>
            <person name="Sabirova J.S."/>
            <person name="Selbitschka W."/>
            <person name="Yakimov M.M."/>
            <person name="Timmis K.N."/>
            <person name="Vorhoelter F.-J."/>
            <person name="Weidner S."/>
            <person name="Kaiser O."/>
            <person name="Golyshin P.N."/>
        </authorList>
    </citation>
    <scope>NUCLEOTIDE SEQUENCE [LARGE SCALE GENOMIC DNA]</scope>
    <source>
        <strain>ATCC 700651 / DSM 11573 / NCIMB 13689 / SK2</strain>
    </source>
</reference>
<gene>
    <name evidence="1" type="primary">rpsU</name>
    <name type="ordered locus">ABO_2060</name>
</gene>
<proteinExistence type="inferred from homology"/>
<keyword id="KW-1185">Reference proteome</keyword>
<keyword id="KW-0687">Ribonucleoprotein</keyword>
<keyword id="KW-0689">Ribosomal protein</keyword>